<gene>
    <name evidence="1" type="primary">rplN</name>
    <name type="ordered locus">Geob_3615</name>
</gene>
<proteinExistence type="inferred from homology"/>
<keyword id="KW-1185">Reference proteome</keyword>
<keyword id="KW-0687">Ribonucleoprotein</keyword>
<keyword id="KW-0689">Ribosomal protein</keyword>
<keyword id="KW-0694">RNA-binding</keyword>
<keyword id="KW-0699">rRNA-binding</keyword>
<evidence type="ECO:0000255" key="1">
    <source>
        <dbReference type="HAMAP-Rule" id="MF_01367"/>
    </source>
</evidence>
<evidence type="ECO:0000305" key="2"/>
<reference key="1">
    <citation type="submission" date="2009-01" db="EMBL/GenBank/DDBJ databases">
        <title>Complete sequence of Geobacter sp. FRC-32.</title>
        <authorList>
            <consortium name="US DOE Joint Genome Institute"/>
            <person name="Lucas S."/>
            <person name="Copeland A."/>
            <person name="Lapidus A."/>
            <person name="Glavina del Rio T."/>
            <person name="Dalin E."/>
            <person name="Tice H."/>
            <person name="Bruce D."/>
            <person name="Goodwin L."/>
            <person name="Pitluck S."/>
            <person name="Saunders E."/>
            <person name="Brettin T."/>
            <person name="Detter J.C."/>
            <person name="Han C."/>
            <person name="Larimer F."/>
            <person name="Land M."/>
            <person name="Hauser L."/>
            <person name="Kyrpides N."/>
            <person name="Ovchinnikova G."/>
            <person name="Kostka J."/>
            <person name="Richardson P."/>
        </authorList>
    </citation>
    <scope>NUCLEOTIDE SEQUENCE [LARGE SCALE GENOMIC DNA]</scope>
    <source>
        <strain>DSM 22248 / JCM 15807 / FRC-32</strain>
    </source>
</reference>
<protein>
    <recommendedName>
        <fullName evidence="1">Large ribosomal subunit protein uL14</fullName>
    </recommendedName>
    <alternativeName>
        <fullName evidence="2">50S ribosomal protein L14</fullName>
    </alternativeName>
</protein>
<dbReference type="EMBL" id="CP001390">
    <property type="protein sequence ID" value="ACM21956.1"/>
    <property type="molecule type" value="Genomic_DNA"/>
</dbReference>
<dbReference type="RefSeq" id="WP_011938005.1">
    <property type="nucleotide sequence ID" value="NC_011979.1"/>
</dbReference>
<dbReference type="SMR" id="B9M6G8"/>
<dbReference type="STRING" id="316067.Geob_3615"/>
<dbReference type="KEGG" id="geo:Geob_3615"/>
<dbReference type="eggNOG" id="COG0093">
    <property type="taxonomic scope" value="Bacteria"/>
</dbReference>
<dbReference type="HOGENOM" id="CLU_095071_2_1_7"/>
<dbReference type="OrthoDB" id="9806379at2"/>
<dbReference type="Proteomes" id="UP000007721">
    <property type="component" value="Chromosome"/>
</dbReference>
<dbReference type="GO" id="GO:0022625">
    <property type="term" value="C:cytosolic large ribosomal subunit"/>
    <property type="evidence" value="ECO:0007669"/>
    <property type="project" value="TreeGrafter"/>
</dbReference>
<dbReference type="GO" id="GO:0070180">
    <property type="term" value="F:large ribosomal subunit rRNA binding"/>
    <property type="evidence" value="ECO:0007669"/>
    <property type="project" value="TreeGrafter"/>
</dbReference>
<dbReference type="GO" id="GO:0003735">
    <property type="term" value="F:structural constituent of ribosome"/>
    <property type="evidence" value="ECO:0007669"/>
    <property type="project" value="InterPro"/>
</dbReference>
<dbReference type="GO" id="GO:0006412">
    <property type="term" value="P:translation"/>
    <property type="evidence" value="ECO:0007669"/>
    <property type="project" value="UniProtKB-UniRule"/>
</dbReference>
<dbReference type="CDD" id="cd00337">
    <property type="entry name" value="Ribosomal_uL14"/>
    <property type="match status" value="1"/>
</dbReference>
<dbReference type="FunFam" id="2.40.150.20:FF:000001">
    <property type="entry name" value="50S ribosomal protein L14"/>
    <property type="match status" value="1"/>
</dbReference>
<dbReference type="Gene3D" id="2.40.150.20">
    <property type="entry name" value="Ribosomal protein L14"/>
    <property type="match status" value="1"/>
</dbReference>
<dbReference type="HAMAP" id="MF_01367">
    <property type="entry name" value="Ribosomal_uL14"/>
    <property type="match status" value="1"/>
</dbReference>
<dbReference type="InterPro" id="IPR000218">
    <property type="entry name" value="Ribosomal_uL14"/>
</dbReference>
<dbReference type="InterPro" id="IPR005745">
    <property type="entry name" value="Ribosomal_uL14_bac-type"/>
</dbReference>
<dbReference type="InterPro" id="IPR019972">
    <property type="entry name" value="Ribosomal_uL14_CS"/>
</dbReference>
<dbReference type="InterPro" id="IPR036853">
    <property type="entry name" value="Ribosomal_uL14_sf"/>
</dbReference>
<dbReference type="NCBIfam" id="TIGR01067">
    <property type="entry name" value="rplN_bact"/>
    <property type="match status" value="1"/>
</dbReference>
<dbReference type="PANTHER" id="PTHR11761">
    <property type="entry name" value="50S/60S RIBOSOMAL PROTEIN L14/L23"/>
    <property type="match status" value="1"/>
</dbReference>
<dbReference type="PANTHER" id="PTHR11761:SF3">
    <property type="entry name" value="LARGE RIBOSOMAL SUBUNIT PROTEIN UL14M"/>
    <property type="match status" value="1"/>
</dbReference>
<dbReference type="Pfam" id="PF00238">
    <property type="entry name" value="Ribosomal_L14"/>
    <property type="match status" value="1"/>
</dbReference>
<dbReference type="SMART" id="SM01374">
    <property type="entry name" value="Ribosomal_L14"/>
    <property type="match status" value="1"/>
</dbReference>
<dbReference type="SUPFAM" id="SSF50193">
    <property type="entry name" value="Ribosomal protein L14"/>
    <property type="match status" value="1"/>
</dbReference>
<dbReference type="PROSITE" id="PS00049">
    <property type="entry name" value="RIBOSOMAL_L14"/>
    <property type="match status" value="1"/>
</dbReference>
<organism>
    <name type="scientific">Geotalea daltonii (strain DSM 22248 / JCM 15807 / FRC-32)</name>
    <name type="common">Geobacter daltonii</name>
    <dbReference type="NCBI Taxonomy" id="316067"/>
    <lineage>
        <taxon>Bacteria</taxon>
        <taxon>Pseudomonadati</taxon>
        <taxon>Thermodesulfobacteriota</taxon>
        <taxon>Desulfuromonadia</taxon>
        <taxon>Geobacterales</taxon>
        <taxon>Geobacteraceae</taxon>
        <taxon>Geotalea</taxon>
    </lineage>
</organism>
<name>RL14_GEODF</name>
<feature type="chain" id="PRO_1000166922" description="Large ribosomal subunit protein uL14">
    <location>
        <begin position="1"/>
        <end position="122"/>
    </location>
</feature>
<sequence>MIQMQTILDVADNSGAKKLFCIKVLGGSKRKYAGIGDIIVASVKEAIPNSKVKKGDVVKAVVVRTAKEIGRPDGSYIRFDGNSGVVINNQKEPVGTRIFGPVARELRAKKFMKIISLAPEVL</sequence>
<comment type="function">
    <text evidence="1">Binds to 23S rRNA. Forms part of two intersubunit bridges in the 70S ribosome.</text>
</comment>
<comment type="subunit">
    <text evidence="1">Part of the 50S ribosomal subunit. Forms a cluster with proteins L3 and L19. In the 70S ribosome, L14 and L19 interact and together make contacts with the 16S rRNA in bridges B5 and B8.</text>
</comment>
<comment type="similarity">
    <text evidence="1">Belongs to the universal ribosomal protein uL14 family.</text>
</comment>
<accession>B9M6G8</accession>